<dbReference type="EMBL" id="GT278471">
    <property type="status" value="NOT_ANNOTATED_CDS"/>
    <property type="molecule type" value="mRNA"/>
</dbReference>
<dbReference type="EMBL" id="GT278612">
    <property type="status" value="NOT_ANNOTATED_CDS"/>
    <property type="molecule type" value="mRNA"/>
</dbReference>
<dbReference type="EMBL" id="GT279486">
    <property type="status" value="NOT_ANNOTATED_CDS"/>
    <property type="molecule type" value="mRNA"/>
</dbReference>
<dbReference type="EMBL" id="GT279809">
    <property type="status" value="NOT_ANNOTATED_CDS"/>
    <property type="molecule type" value="mRNA"/>
</dbReference>
<dbReference type="EMBL" id="GT280125">
    <property type="status" value="NOT_ANNOTATED_CDS"/>
    <property type="molecule type" value="mRNA"/>
</dbReference>
<dbReference type="EMBL" id="GT280369">
    <property type="status" value="NOT_ANNOTATED_CDS"/>
    <property type="molecule type" value="mRNA"/>
</dbReference>
<dbReference type="EMBL" id="GT281301">
    <property type="status" value="NOT_ANNOTATED_CDS"/>
    <property type="molecule type" value="mRNA"/>
</dbReference>
<dbReference type="EMBL" id="GT281537">
    <property type="status" value="NOT_ANNOTATED_CDS"/>
    <property type="molecule type" value="mRNA"/>
</dbReference>
<dbReference type="EMBL" id="GT281820">
    <property type="status" value="NOT_ANNOTATED_CDS"/>
    <property type="molecule type" value="mRNA"/>
</dbReference>
<dbReference type="EMBL" id="GT282070">
    <property type="status" value="NOT_ANNOTATED_CDS"/>
    <property type="molecule type" value="mRNA"/>
</dbReference>
<dbReference type="EMBL" id="GT283253">
    <property type="status" value="NOT_ANNOTATED_CDS"/>
    <property type="molecule type" value="mRNA"/>
</dbReference>
<dbReference type="EMBL" id="GT283272">
    <property type="status" value="NOT_ANNOTATED_CDS"/>
    <property type="molecule type" value="mRNA"/>
</dbReference>
<dbReference type="EMBL" id="EZ420190">
    <property type="status" value="NOT_ANNOTATED_CDS"/>
    <property type="molecule type" value="mRNA"/>
</dbReference>
<dbReference type="GO" id="GO:0009986">
    <property type="term" value="C:cell surface"/>
    <property type="evidence" value="ECO:0007669"/>
    <property type="project" value="TreeGrafter"/>
</dbReference>
<dbReference type="GO" id="GO:0005576">
    <property type="term" value="C:extracellular region"/>
    <property type="evidence" value="ECO:0007669"/>
    <property type="project" value="UniProtKB-SubCell"/>
</dbReference>
<dbReference type="GO" id="GO:0005102">
    <property type="term" value="F:signaling receptor binding"/>
    <property type="evidence" value="ECO:0007669"/>
    <property type="project" value="TreeGrafter"/>
</dbReference>
<dbReference type="Gene3D" id="2.10.25.10">
    <property type="entry name" value="Laminin"/>
    <property type="match status" value="1"/>
</dbReference>
<dbReference type="InterPro" id="IPR050969">
    <property type="entry name" value="Dev_Signal_Modulators"/>
</dbReference>
<dbReference type="InterPro" id="IPR000742">
    <property type="entry name" value="EGF-like_dom"/>
</dbReference>
<dbReference type="PANTHER" id="PTHR14949">
    <property type="entry name" value="EGF-LIKE-DOMAIN, MULTIPLE 7, 8"/>
    <property type="match status" value="1"/>
</dbReference>
<dbReference type="PANTHER" id="PTHR14949:SF54">
    <property type="entry name" value="VWFD DOMAIN-CONTAINING PROTEIN"/>
    <property type="match status" value="1"/>
</dbReference>
<dbReference type="SMART" id="SM00181">
    <property type="entry name" value="EGF"/>
    <property type="match status" value="2"/>
</dbReference>
<dbReference type="PROSITE" id="PS00022">
    <property type="entry name" value="EGF_1"/>
    <property type="match status" value="2"/>
</dbReference>
<dbReference type="PROSITE" id="PS01186">
    <property type="entry name" value="EGF_2"/>
    <property type="match status" value="1"/>
</dbReference>
<dbReference type="PROSITE" id="PS50026">
    <property type="entry name" value="EGF_3"/>
    <property type="match status" value="2"/>
</dbReference>
<evidence type="ECO:0000255" key="1"/>
<evidence type="ECO:0000255" key="2">
    <source>
        <dbReference type="PROSITE-ProRule" id="PRU00076"/>
    </source>
</evidence>
<evidence type="ECO:0000269" key="3">
    <source>
    </source>
</evidence>
<evidence type="ECO:0000269" key="4">
    <source>
    </source>
</evidence>
<evidence type="ECO:0000305" key="5"/>
<reference evidence="5" key="1">
    <citation type="journal article" date="2010" name="Mol. Biol. Evol.">
        <title>Parallel evolution of nacre building gene sets in molluscs.</title>
        <authorList>
            <person name="Jackson D.J."/>
            <person name="McDougall C."/>
            <person name="Woodcroft B."/>
            <person name="Moase P."/>
            <person name="Rose R.A."/>
            <person name="Kube M."/>
            <person name="Reinhardt R."/>
            <person name="Rokhsar D.S."/>
            <person name="Montagnani C."/>
            <person name="Joubert C."/>
            <person name="Piquemal D."/>
            <person name="Degnan B.M."/>
        </authorList>
    </citation>
    <scope>NUCLEOTIDE SEQUENCE [MRNA]</scope>
    <scope>IDENTIFICATION</scope>
    <source>
        <tissue evidence="3">Mantle</tissue>
    </source>
</reference>
<reference key="2">
    <citation type="journal article" date="2012" name="Proc. Natl. Acad. Sci. U.S.A.">
        <title>Different secretory repertoires control the biomineralization processes of prism and nacre deposition of the pearl oyster shell.</title>
        <authorList>
            <person name="Marie B."/>
            <person name="Joubert C."/>
            <person name="Tayale A."/>
            <person name="Zanella-Cleon I."/>
            <person name="Belliard C."/>
            <person name="Piquemal D."/>
            <person name="Cochennec-Laureau N."/>
            <person name="Marin F."/>
            <person name="Gueguen Y."/>
            <person name="Montagnani C."/>
        </authorList>
    </citation>
    <scope>PROTEIN SEQUENCE OF 143-157; 192-200 AND 282-299</scope>
    <scope>SUBCELLULAR LOCATION</scope>
    <scope>TISSUE SPECIFICITY</scope>
    <source>
        <tissue>Shell</tissue>
    </source>
</reference>
<comment type="subcellular location">
    <subcellularLocation>
        <location evidence="4">Secreted</location>
    </subcellularLocation>
</comment>
<comment type="tissue specificity">
    <text evidence="4">Prismatic layer of shell (at protein level). Expressed primarily in the mantle with highest level in the mantle edge and lower level in the mantle pallium.</text>
</comment>
<comment type="sequence caution" evidence="5">
    <conflict type="frameshift">
        <sequence resource="EMBL" id="GT283272"/>
    </conflict>
</comment>
<protein>
    <recommendedName>
        <fullName>EGF-like domain-containing protein 2</fullName>
    </recommendedName>
</protein>
<keyword id="KW-0903">Direct protein sequencing</keyword>
<keyword id="KW-1015">Disulfide bond</keyword>
<keyword id="KW-0245">EGF-like domain</keyword>
<keyword id="KW-0677">Repeat</keyword>
<keyword id="KW-0964">Secreted</keyword>
<keyword id="KW-0732">Signal</keyword>
<proteinExistence type="evidence at protein level"/>
<sequence>MPPSLSHLFLLSTFASLALCSFYCKNPGYPCLNGGTCLYNGECNCTSGFRGFNCGLDSSTISAACTVECHNKGICFNGDKCYCTKDYMGPTCQQAYDFADCNKSSMKIKAYRPTEFNGEIFLMQSMFGCKLTEVTSTIPGYKQYELDVPHDSTGPCKLKKTIDATTGDVHFEVNVSTIHHAGQFGMYDGLKTVSCHYSSRDQAIVKDVTNHELLVSVTTSDGNTQNIQEIQTNDVIHLTFNPVNLPGGYKGVKILDLEMYSVQWNEVNSILLLKDQCMTQKADELGYSVSNEVDGYSGRAILKAIPLFENVQASVYFNYRLRFCRNRCKIKSCPSQSPKPMPMGEIFKHQGQGIRIV</sequence>
<feature type="signal peptide" evidence="1">
    <location>
        <begin position="1"/>
        <end position="20"/>
    </location>
</feature>
<feature type="chain" id="PRO_0000413071" description="EGF-like domain-containing protein 2" evidence="1">
    <location>
        <begin position="21"/>
        <end position="357"/>
    </location>
</feature>
<feature type="domain" description="EGF-like 1" evidence="2">
    <location>
        <begin position="21"/>
        <end position="55"/>
    </location>
</feature>
<feature type="domain" description="EGF-like 2" evidence="2">
    <location>
        <begin position="61"/>
        <end position="93"/>
    </location>
</feature>
<feature type="disulfide bond" evidence="2">
    <location>
        <begin position="24"/>
        <end position="37"/>
    </location>
</feature>
<feature type="disulfide bond" evidence="2">
    <location>
        <begin position="31"/>
        <end position="43"/>
    </location>
</feature>
<feature type="disulfide bond" evidence="2">
    <location>
        <begin position="45"/>
        <end position="54"/>
    </location>
</feature>
<feature type="disulfide bond" evidence="2">
    <location>
        <begin position="65"/>
        <end position="75"/>
    </location>
</feature>
<feature type="disulfide bond" evidence="2">
    <location>
        <begin position="69"/>
        <end position="81"/>
    </location>
</feature>
<feature type="disulfide bond" evidence="2">
    <location>
        <begin position="83"/>
        <end position="92"/>
    </location>
</feature>
<feature type="sequence conflict" description="In Ref. 1; GT283272." evidence="5" ref="1">
    <original>V</original>
    <variation>M</variation>
    <location>
        <position position="173"/>
    </location>
</feature>
<feature type="sequence conflict" description="In Ref. 1; GT283272." evidence="5" ref="1">
    <original>H</original>
    <variation>P</variation>
    <location>
        <position position="180"/>
    </location>
</feature>
<feature type="sequence conflict" description="In Ref. 1; GT278612." evidence="5" ref="1">
    <original>D</original>
    <variation>E</variation>
    <location>
        <position position="201"/>
    </location>
</feature>
<feature type="sequence conflict" description="In Ref. 1; GT281537." evidence="5" ref="1">
    <original>R</original>
    <variation>K</variation>
    <location>
        <position position="325"/>
    </location>
</feature>
<accession>P86954</accession>
<organism>
    <name type="scientific">Pinctada maxima</name>
    <name type="common">Silver-lipped pearl oyster</name>
    <name type="synonym">White-lipped pearl oyster</name>
    <dbReference type="NCBI Taxonomy" id="104660"/>
    <lineage>
        <taxon>Eukaryota</taxon>
        <taxon>Metazoa</taxon>
        <taxon>Spiralia</taxon>
        <taxon>Lophotrochozoa</taxon>
        <taxon>Mollusca</taxon>
        <taxon>Bivalvia</taxon>
        <taxon>Autobranchia</taxon>
        <taxon>Pteriomorphia</taxon>
        <taxon>Pterioida</taxon>
        <taxon>Pterioidea</taxon>
        <taxon>Pteriidae</taxon>
        <taxon>Pinctada</taxon>
    </lineage>
</organism>
<name>ELDP2_PINMA</name>